<dbReference type="EMBL" id="CP000260">
    <property type="protein sequence ID" value="ABF35020.1"/>
    <property type="molecule type" value="Genomic_DNA"/>
</dbReference>
<dbReference type="SMR" id="Q1JED8"/>
<dbReference type="KEGG" id="sph:MGAS10270_Spy1955"/>
<dbReference type="HOGENOM" id="CLU_078938_3_2_9"/>
<dbReference type="Proteomes" id="UP000002436">
    <property type="component" value="Chromosome"/>
</dbReference>
<dbReference type="GO" id="GO:1990904">
    <property type="term" value="C:ribonucleoprotein complex"/>
    <property type="evidence" value="ECO:0007669"/>
    <property type="project" value="UniProtKB-KW"/>
</dbReference>
<dbReference type="GO" id="GO:0005840">
    <property type="term" value="C:ribosome"/>
    <property type="evidence" value="ECO:0007669"/>
    <property type="project" value="UniProtKB-KW"/>
</dbReference>
<dbReference type="GO" id="GO:0019843">
    <property type="term" value="F:rRNA binding"/>
    <property type="evidence" value="ECO:0007669"/>
    <property type="project" value="UniProtKB-UniRule"/>
</dbReference>
<dbReference type="GO" id="GO:0003735">
    <property type="term" value="F:structural constituent of ribosome"/>
    <property type="evidence" value="ECO:0007669"/>
    <property type="project" value="InterPro"/>
</dbReference>
<dbReference type="GO" id="GO:0006412">
    <property type="term" value="P:translation"/>
    <property type="evidence" value="ECO:0007669"/>
    <property type="project" value="UniProtKB-UniRule"/>
</dbReference>
<dbReference type="FunFam" id="3.40.5.10:FF:000002">
    <property type="entry name" value="50S ribosomal protein L9"/>
    <property type="match status" value="1"/>
</dbReference>
<dbReference type="Gene3D" id="3.10.430.100">
    <property type="entry name" value="Ribosomal protein L9, C-terminal domain"/>
    <property type="match status" value="1"/>
</dbReference>
<dbReference type="Gene3D" id="3.40.5.10">
    <property type="entry name" value="Ribosomal protein L9, N-terminal domain"/>
    <property type="match status" value="1"/>
</dbReference>
<dbReference type="HAMAP" id="MF_00503">
    <property type="entry name" value="Ribosomal_bL9"/>
    <property type="match status" value="1"/>
</dbReference>
<dbReference type="InterPro" id="IPR000244">
    <property type="entry name" value="Ribosomal_bL9"/>
</dbReference>
<dbReference type="InterPro" id="IPR009027">
    <property type="entry name" value="Ribosomal_bL9/RNase_H1_N"/>
</dbReference>
<dbReference type="InterPro" id="IPR020594">
    <property type="entry name" value="Ribosomal_bL9_bac/chp"/>
</dbReference>
<dbReference type="InterPro" id="IPR020069">
    <property type="entry name" value="Ribosomal_bL9_C"/>
</dbReference>
<dbReference type="InterPro" id="IPR036791">
    <property type="entry name" value="Ribosomal_bL9_C_sf"/>
</dbReference>
<dbReference type="InterPro" id="IPR020070">
    <property type="entry name" value="Ribosomal_bL9_N"/>
</dbReference>
<dbReference type="InterPro" id="IPR036935">
    <property type="entry name" value="Ribosomal_bL9_N_sf"/>
</dbReference>
<dbReference type="NCBIfam" id="TIGR00158">
    <property type="entry name" value="L9"/>
    <property type="match status" value="1"/>
</dbReference>
<dbReference type="PANTHER" id="PTHR21368">
    <property type="entry name" value="50S RIBOSOMAL PROTEIN L9"/>
    <property type="match status" value="1"/>
</dbReference>
<dbReference type="Pfam" id="PF03948">
    <property type="entry name" value="Ribosomal_L9_C"/>
    <property type="match status" value="1"/>
</dbReference>
<dbReference type="Pfam" id="PF01281">
    <property type="entry name" value="Ribosomal_L9_N"/>
    <property type="match status" value="1"/>
</dbReference>
<dbReference type="SUPFAM" id="SSF55658">
    <property type="entry name" value="L9 N-domain-like"/>
    <property type="match status" value="1"/>
</dbReference>
<dbReference type="SUPFAM" id="SSF55653">
    <property type="entry name" value="Ribosomal protein L9 C-domain"/>
    <property type="match status" value="1"/>
</dbReference>
<dbReference type="PROSITE" id="PS00651">
    <property type="entry name" value="RIBOSOMAL_L9"/>
    <property type="match status" value="1"/>
</dbReference>
<keyword id="KW-0687">Ribonucleoprotein</keyword>
<keyword id="KW-0689">Ribosomal protein</keyword>
<keyword id="KW-0694">RNA-binding</keyword>
<keyword id="KW-0699">rRNA-binding</keyword>
<organism>
    <name type="scientific">Streptococcus pyogenes serotype M2 (strain MGAS10270)</name>
    <dbReference type="NCBI Taxonomy" id="370552"/>
    <lineage>
        <taxon>Bacteria</taxon>
        <taxon>Bacillati</taxon>
        <taxon>Bacillota</taxon>
        <taxon>Bacilli</taxon>
        <taxon>Lactobacillales</taxon>
        <taxon>Streptococcaceae</taxon>
        <taxon>Streptococcus</taxon>
    </lineage>
</organism>
<evidence type="ECO:0000255" key="1">
    <source>
        <dbReference type="HAMAP-Rule" id="MF_00503"/>
    </source>
</evidence>
<evidence type="ECO:0000305" key="2"/>
<sequence>MKVIFLADVKGKGKKGEIKEVPTGYAQNFLIKKNLAKEATSQSIGELKGKQKAEEKAQAEILAEAQAVKAVLDEDKTRVQFQEKVGPDGRTFGSITAKKISEELQKQFGVKVDKRHIVLDHPIRAIGLIEVPVKLHKEVTAEIKLTITEA</sequence>
<gene>
    <name evidence="1" type="primary">rplI</name>
    <name type="ordered locus">MGAS10270_Spy1955</name>
</gene>
<protein>
    <recommendedName>
        <fullName evidence="1">Large ribosomal subunit protein bL9</fullName>
    </recommendedName>
    <alternativeName>
        <fullName evidence="2">50S ribosomal protein L9</fullName>
    </alternativeName>
</protein>
<comment type="function">
    <text evidence="1">Binds to the 23S rRNA.</text>
</comment>
<comment type="similarity">
    <text evidence="1">Belongs to the bacterial ribosomal protein bL9 family.</text>
</comment>
<feature type="chain" id="PRO_0000258494" description="Large ribosomal subunit protein bL9">
    <location>
        <begin position="1"/>
        <end position="150"/>
    </location>
</feature>
<proteinExistence type="inferred from homology"/>
<reference key="1">
    <citation type="journal article" date="2006" name="Proc. Natl. Acad. Sci. U.S.A.">
        <title>Molecular genetic anatomy of inter- and intraserotype variation in the human bacterial pathogen group A Streptococcus.</title>
        <authorList>
            <person name="Beres S.B."/>
            <person name="Richter E.W."/>
            <person name="Nagiec M.J."/>
            <person name="Sumby P."/>
            <person name="Porcella S.F."/>
            <person name="DeLeo F.R."/>
            <person name="Musser J.M."/>
        </authorList>
    </citation>
    <scope>NUCLEOTIDE SEQUENCE [LARGE SCALE GENOMIC DNA]</scope>
    <source>
        <strain>MGAS10270</strain>
    </source>
</reference>
<accession>Q1JED8</accession>
<name>RL9_STRPD</name>